<organism>
    <name type="scientific">Agrobacterium fabrum (strain C58 / ATCC 33970)</name>
    <name type="common">Agrobacterium tumefaciens (strain C58)</name>
    <dbReference type="NCBI Taxonomy" id="176299"/>
    <lineage>
        <taxon>Bacteria</taxon>
        <taxon>Pseudomonadati</taxon>
        <taxon>Pseudomonadota</taxon>
        <taxon>Alphaproteobacteria</taxon>
        <taxon>Hyphomicrobiales</taxon>
        <taxon>Rhizobiaceae</taxon>
        <taxon>Rhizobium/Agrobacterium group</taxon>
        <taxon>Agrobacterium</taxon>
        <taxon>Agrobacterium tumefaciens complex</taxon>
    </lineage>
</organism>
<geneLocation type="plasmid">
    <name>pTiC58</name>
</geneLocation>
<evidence type="ECO:0000255" key="1"/>
<evidence type="ECO:0000256" key="2">
    <source>
        <dbReference type="SAM" id="MobiDB-lite"/>
    </source>
</evidence>
<evidence type="ECO:0000305" key="3"/>
<sequence length="668" mass="73528">MNSSKTTPQRLAVSIVCSLAAGFCAASLYVTFRHGFNGEAMMTFSVFAFWYETPLYMGHATPVFYCGLAIVVSTSIVVLLSQLIISFRNHEHHGTARWAGFGEMRHAGYLQRYNRIKGPIFGKTCGPRWFGSYLTNGEQPHSLVVAPTRAGKGVGVVIPTLLTFKGSVIALDVKGELFELTSRARKAGGDAVFKFSPLDPERRTHCYNPVLDIAALPPERQFTETRRLAANLITAKGKGAEGFIDGARDLFVAGILTCIERGTPTIGAVYDLFAQPGEKYKLFAHLAEESRNKEAQRIFDNMAGNDTKILTSYTSVLGDGGLNLWADPLVKAATSRSDFSVYDLRRKRTCVYLCVSPNDLEVVAPLMRLLFQQVVSILQRSLPGKDERHEVLFLLDEFKHLGKLEAIETAITTIAGYKGRFMFIIQSLSALTGIYDDAGKQNFLSNTGVQVFMATADDETPTYISKAIGDYTFKARSTSYSQARMFDHNIQISDQGAPLLRPEQVRLLDDNNEIVLIKGHPPLKLRKVRYYSDRMLRRLFECQIGALPEPASLMLSEGVHRDGQDLSQQAAVTEAQGLGDIDSIPNNMEAATPQNSEMDDEQDSLPTGIDVPQGLIESDEVKEDAGGVVPDFGVSAEMAPAMIAQQQLLEQIIALQQRYGPASSHSVK</sequence>
<comment type="interaction">
    <interactant intactId="EBI-7412695">
        <id>P18594</id>
    </interactant>
    <interactant intactId="EBI-7412683">
        <id>P07165</id>
        <label>virC1</label>
    </interactant>
    <organismsDiffer>false</organismsDiffer>
    <experiments>4</experiments>
</comment>
<comment type="subcellular location">
    <subcellularLocation>
        <location evidence="3">Cell membrane</location>
        <topology evidence="3">Multi-pass membrane protein</topology>
    </subcellularLocation>
</comment>
<comment type="similarity">
    <text evidence="3">Belongs to the VirD4/TraG family.</text>
</comment>
<feature type="chain" id="PRO_0000221652" description="Protein VirD4">
    <location>
        <begin position="1"/>
        <end position="668"/>
    </location>
</feature>
<feature type="transmembrane region" description="Helical" evidence="1">
    <location>
        <begin position="12"/>
        <end position="32"/>
    </location>
</feature>
<feature type="transmembrane region" description="Helical" evidence="1">
    <location>
        <begin position="67"/>
        <end position="87"/>
    </location>
</feature>
<feature type="transmembrane region" description="Helical" evidence="1">
    <location>
        <begin position="153"/>
        <end position="173"/>
    </location>
</feature>
<feature type="region of interest" description="Disordered" evidence="2">
    <location>
        <begin position="577"/>
        <end position="612"/>
    </location>
</feature>
<feature type="sequence conflict" description="In Ref. 1; AAA91606." evidence="3" ref="1">
    <original>G</original>
    <variation>R</variation>
    <location>
        <position position="189"/>
    </location>
</feature>
<feature type="sequence conflict" description="In Ref. 1; AAA91606." evidence="3" ref="1">
    <original>E</original>
    <variation>D</variation>
    <location>
        <position position="260"/>
    </location>
</feature>
<feature type="sequence conflict" description="In Ref. 1; AAA91606." evidence="3" ref="1">
    <original>QGLGDID</original>
    <variation>ASTR</variation>
    <location>
        <begin position="576"/>
        <end position="582"/>
    </location>
</feature>
<accession>P18594</accession>
<name>VIRD4_AGRFC</name>
<reference key="1">
    <citation type="journal article" date="1990" name="Plasmid">
        <title>Molecular characterization of the vir regulon of Agrobacterium tumefaciens: complete nucleotide sequence and gene organization of the 28.63-kbp regulon cloned as a single unit.</title>
        <authorList>
            <person name="Rogowsky P.M."/>
            <person name="Powell B.S."/>
            <person name="Shirasu K."/>
            <person name="Lin T.-S."/>
            <person name="Morel P."/>
            <person name="Zyprian E.M."/>
            <person name="Steck T.R."/>
            <person name="Kado C.I."/>
        </authorList>
    </citation>
    <scope>NUCLEOTIDE SEQUENCE [GENOMIC DNA]</scope>
</reference>
<reference key="2">
    <citation type="journal article" date="2001" name="Science">
        <title>The genome of the natural genetic engineer Agrobacterium tumefaciens C58.</title>
        <authorList>
            <person name="Wood D.W."/>
            <person name="Setubal J.C."/>
            <person name="Kaul R."/>
            <person name="Monks D.E."/>
            <person name="Kitajima J.P."/>
            <person name="Okura V.K."/>
            <person name="Zhou Y."/>
            <person name="Chen L."/>
            <person name="Wood G.E."/>
            <person name="Almeida N.F. Jr."/>
            <person name="Woo L."/>
            <person name="Chen Y."/>
            <person name="Paulsen I.T."/>
            <person name="Eisen J.A."/>
            <person name="Karp P.D."/>
            <person name="Bovee D. Sr."/>
            <person name="Chapman P."/>
            <person name="Clendenning J."/>
            <person name="Deatherage G."/>
            <person name="Gillet W."/>
            <person name="Grant C."/>
            <person name="Kutyavin T."/>
            <person name="Levy R."/>
            <person name="Li M.-J."/>
            <person name="McClelland E."/>
            <person name="Palmieri A."/>
            <person name="Raymond C."/>
            <person name="Rouse G."/>
            <person name="Saenphimmachak C."/>
            <person name="Wu Z."/>
            <person name="Romero P."/>
            <person name="Gordon D."/>
            <person name="Zhang S."/>
            <person name="Yoo H."/>
            <person name="Tao Y."/>
            <person name="Biddle P."/>
            <person name="Jung M."/>
            <person name="Krespan W."/>
            <person name="Perry M."/>
            <person name="Gordon-Kamm B."/>
            <person name="Liao L."/>
            <person name="Kim S."/>
            <person name="Hendrick C."/>
            <person name="Zhao Z.-Y."/>
            <person name="Dolan M."/>
            <person name="Chumley F."/>
            <person name="Tingey S.V."/>
            <person name="Tomb J.-F."/>
            <person name="Gordon M.P."/>
            <person name="Olson M.V."/>
            <person name="Nester E.W."/>
        </authorList>
    </citation>
    <scope>NUCLEOTIDE SEQUENCE [LARGE SCALE GENOMIC DNA]</scope>
</reference>
<reference key="3">
    <citation type="journal article" date="2001" name="Science">
        <title>Genome sequence of the plant pathogen and biotechnology agent Agrobacterium tumefaciens C58.</title>
        <authorList>
            <person name="Goodner B."/>
            <person name="Hinkle G."/>
            <person name="Gattung S."/>
            <person name="Miller N."/>
            <person name="Blanchard M."/>
            <person name="Qurollo B."/>
            <person name="Goldman B.S."/>
            <person name="Cao Y."/>
            <person name="Askenazi M."/>
            <person name="Halling C."/>
            <person name="Mullin L."/>
            <person name="Houmiel K."/>
            <person name="Gordon J."/>
            <person name="Vaudin M."/>
            <person name="Iartchouk O."/>
            <person name="Epp A."/>
            <person name="Liu F."/>
            <person name="Wollam C."/>
            <person name="Allinger M."/>
            <person name="Doughty D."/>
            <person name="Scott C."/>
            <person name="Lappas C."/>
            <person name="Markelz B."/>
            <person name="Flanagan C."/>
            <person name="Crowell C."/>
            <person name="Gurson J."/>
            <person name="Lomo C."/>
            <person name="Sear C."/>
            <person name="Strub G."/>
            <person name="Cielo C."/>
            <person name="Slater S."/>
        </authorList>
    </citation>
    <scope>NUCLEOTIDE SEQUENCE [LARGE SCALE GENOMIC DNA]</scope>
    <source>
        <strain>C58 / ATCC 33970</strain>
    </source>
</reference>
<gene>
    <name type="primary">virD4</name>
    <name type="ordered locus">Atu6184</name>
    <name type="ORF">AGR_pTi_23</name>
</gene>
<dbReference type="EMBL" id="J03320">
    <property type="protein sequence ID" value="AAA91606.1"/>
    <property type="molecule type" value="Genomic_DNA"/>
</dbReference>
<dbReference type="EMBL" id="AE007871">
    <property type="protein sequence ID" value="AAK90946.2"/>
    <property type="molecule type" value="Genomic_DNA"/>
</dbReference>
<dbReference type="PIR" id="AF3250">
    <property type="entry name" value="AF3250"/>
</dbReference>
<dbReference type="PIR" id="S11841">
    <property type="entry name" value="S11841"/>
</dbReference>
<dbReference type="RefSeq" id="NP_396505.2">
    <property type="nucleotide sequence ID" value="NC_003065.3"/>
</dbReference>
<dbReference type="RefSeq" id="WP_010974920.1">
    <property type="nucleotide sequence ID" value="NC_003065.3"/>
</dbReference>
<dbReference type="SMR" id="P18594"/>
<dbReference type="IntAct" id="P18594">
    <property type="interactions" value="1"/>
</dbReference>
<dbReference type="MINT" id="P18594"/>
<dbReference type="EnsemblBacteria" id="AAK90946">
    <property type="protein sequence ID" value="AAK90946"/>
    <property type="gene ID" value="Atu6184"/>
</dbReference>
<dbReference type="GeneID" id="1137507"/>
<dbReference type="KEGG" id="atu:Atu6184"/>
<dbReference type="PATRIC" id="fig|176299.10.peg.5378"/>
<dbReference type="HOGENOM" id="CLU_012039_1_3_5"/>
<dbReference type="OrthoDB" id="9759295at2"/>
<dbReference type="PhylomeDB" id="P18594"/>
<dbReference type="BioCyc" id="AGRO:ATU6184-MONOMER"/>
<dbReference type="PHI-base" id="PHI:11110"/>
<dbReference type="Proteomes" id="UP000000813">
    <property type="component" value="Plasmid Ti"/>
</dbReference>
<dbReference type="GO" id="GO:0005886">
    <property type="term" value="C:plasma membrane"/>
    <property type="evidence" value="ECO:0007669"/>
    <property type="project" value="UniProtKB-SubCell"/>
</dbReference>
<dbReference type="GO" id="GO:0043684">
    <property type="term" value="C:type IV secretion system complex"/>
    <property type="evidence" value="ECO:0000304"/>
    <property type="project" value="PAMGO_GAT"/>
</dbReference>
<dbReference type="GO" id="GO:0030255">
    <property type="term" value="P:protein secretion by the type IV secretion system"/>
    <property type="evidence" value="ECO:0000304"/>
    <property type="project" value="PAMGO_GAT"/>
</dbReference>
<dbReference type="CDD" id="cd01127">
    <property type="entry name" value="TrwB_TraG_TraD_VirD4"/>
    <property type="match status" value="1"/>
</dbReference>
<dbReference type="FunFam" id="3.40.50.300:FF:001671">
    <property type="entry name" value="Type IV secretion system protein VirD4"/>
    <property type="match status" value="1"/>
</dbReference>
<dbReference type="Gene3D" id="3.40.50.300">
    <property type="entry name" value="P-loop containing nucleotide triphosphate hydrolases"/>
    <property type="match status" value="1"/>
</dbReference>
<dbReference type="InterPro" id="IPR027417">
    <property type="entry name" value="P-loop_NTPase"/>
</dbReference>
<dbReference type="InterPro" id="IPR051539">
    <property type="entry name" value="T4SS-coupling_protein"/>
</dbReference>
<dbReference type="InterPro" id="IPR003688">
    <property type="entry name" value="TraG/VirD4"/>
</dbReference>
<dbReference type="NCBIfam" id="NF010424">
    <property type="entry name" value="PRK13850.1"/>
    <property type="match status" value="1"/>
</dbReference>
<dbReference type="PANTHER" id="PTHR37937">
    <property type="entry name" value="CONJUGATIVE TRANSFER: DNA TRANSPORT"/>
    <property type="match status" value="1"/>
</dbReference>
<dbReference type="PANTHER" id="PTHR37937:SF1">
    <property type="entry name" value="CONJUGATIVE TRANSFER: DNA TRANSPORT"/>
    <property type="match status" value="1"/>
</dbReference>
<dbReference type="Pfam" id="PF02534">
    <property type="entry name" value="T4SS-DNA_transf"/>
    <property type="match status" value="1"/>
</dbReference>
<dbReference type="SUPFAM" id="SSF52540">
    <property type="entry name" value="P-loop containing nucleoside triphosphate hydrolases"/>
    <property type="match status" value="1"/>
</dbReference>
<protein>
    <recommendedName>
        <fullName>Protein VirD4</fullName>
    </recommendedName>
</protein>
<proteinExistence type="evidence at protein level"/>
<keyword id="KW-1003">Cell membrane</keyword>
<keyword id="KW-0184">Conjugation</keyword>
<keyword id="KW-0192">Crown gall tumor</keyword>
<keyword id="KW-0472">Membrane</keyword>
<keyword id="KW-0614">Plasmid</keyword>
<keyword id="KW-1185">Reference proteome</keyword>
<keyword id="KW-0812">Transmembrane</keyword>
<keyword id="KW-1133">Transmembrane helix</keyword>